<comment type="function">
    <text evidence="1">Component of the A-type ATP synthase that produces ATP from ADP in the presence of a proton gradient across the membrane.</text>
</comment>
<comment type="subunit">
    <text evidence="1">Has multiple subunits with at least A(3), B(3), C, D, E, F, H, I and proteolipid K(x).</text>
</comment>
<comment type="subcellular location">
    <subcellularLocation>
        <location evidence="1">Cell membrane</location>
        <topology evidence="1">Peripheral membrane protein</topology>
    </subcellularLocation>
</comment>
<comment type="similarity">
    <text evidence="1">Belongs to the V-ATPase V0D/AC39 subunit family.</text>
</comment>
<proteinExistence type="inferred from homology"/>
<reference key="1">
    <citation type="journal article" date="2016" name="Stand. Genomic Sci.">
        <title>Complete genome sequence of the Antarctic Halorubrum lacusprofundi type strain ACAM 34.</title>
        <authorList>
            <person name="Anderson I.J."/>
            <person name="DasSarma P."/>
            <person name="Lucas S."/>
            <person name="Copeland A."/>
            <person name="Lapidus A."/>
            <person name="Del Rio T.G."/>
            <person name="Tice H."/>
            <person name="Dalin E."/>
            <person name="Bruce D.C."/>
            <person name="Goodwin L."/>
            <person name="Pitluck S."/>
            <person name="Sims D."/>
            <person name="Brettin T.S."/>
            <person name="Detter J.C."/>
            <person name="Han C.S."/>
            <person name="Larimer F."/>
            <person name="Hauser L."/>
            <person name="Land M."/>
            <person name="Ivanova N."/>
            <person name="Richardson P."/>
            <person name="Cavicchioli R."/>
            <person name="DasSarma S."/>
            <person name="Woese C.R."/>
            <person name="Kyrpides N.C."/>
        </authorList>
    </citation>
    <scope>NUCLEOTIDE SEQUENCE [LARGE SCALE GENOMIC DNA]</scope>
    <source>
        <strain>ATCC 49239 / DSM 5036 / JCM 8891 / ACAM 34</strain>
    </source>
</reference>
<dbReference type="EMBL" id="CP001365">
    <property type="protein sequence ID" value="ACM55884.1"/>
    <property type="molecule type" value="Genomic_DNA"/>
</dbReference>
<dbReference type="RefSeq" id="WP_012659525.1">
    <property type="nucleotide sequence ID" value="NC_012029.1"/>
</dbReference>
<dbReference type="SMR" id="B9LS39"/>
<dbReference type="GeneID" id="7401205"/>
<dbReference type="KEGG" id="hla:Hlac_0279"/>
<dbReference type="eggNOG" id="arCOG02459">
    <property type="taxonomic scope" value="Archaea"/>
</dbReference>
<dbReference type="HOGENOM" id="CLU_059311_0_1_2"/>
<dbReference type="Proteomes" id="UP000000740">
    <property type="component" value="Chromosome 1"/>
</dbReference>
<dbReference type="GO" id="GO:0005886">
    <property type="term" value="C:plasma membrane"/>
    <property type="evidence" value="ECO:0007669"/>
    <property type="project" value="UniProtKB-SubCell"/>
</dbReference>
<dbReference type="GO" id="GO:0033179">
    <property type="term" value="C:proton-transporting V-type ATPase, V0 domain"/>
    <property type="evidence" value="ECO:0007669"/>
    <property type="project" value="InterPro"/>
</dbReference>
<dbReference type="GO" id="GO:0005524">
    <property type="term" value="F:ATP binding"/>
    <property type="evidence" value="ECO:0007669"/>
    <property type="project" value="UniProtKB-UniRule"/>
</dbReference>
<dbReference type="GO" id="GO:0046933">
    <property type="term" value="F:proton-transporting ATP synthase activity, rotational mechanism"/>
    <property type="evidence" value="ECO:0007669"/>
    <property type="project" value="UniProtKB-UniRule"/>
</dbReference>
<dbReference type="GO" id="GO:0046961">
    <property type="term" value="F:proton-transporting ATPase activity, rotational mechanism"/>
    <property type="evidence" value="ECO:0007669"/>
    <property type="project" value="InterPro"/>
</dbReference>
<dbReference type="GO" id="GO:0042777">
    <property type="term" value="P:proton motive force-driven plasma membrane ATP synthesis"/>
    <property type="evidence" value="ECO:0007669"/>
    <property type="project" value="UniProtKB-UniRule"/>
</dbReference>
<dbReference type="Gene3D" id="1.10.132.50">
    <property type="entry name" value="ATP synthase (C/AC39) subunit, domain 3"/>
    <property type="match status" value="1"/>
</dbReference>
<dbReference type="Gene3D" id="1.20.1690.10">
    <property type="entry name" value="V-type ATP synthase subunit C domain"/>
    <property type="match status" value="2"/>
</dbReference>
<dbReference type="HAMAP" id="MF_00314">
    <property type="entry name" value="ATP_synth_C_arch"/>
    <property type="match status" value="1"/>
</dbReference>
<dbReference type="InterPro" id="IPR036079">
    <property type="entry name" value="ATPase_csu/dsu_sf"/>
</dbReference>
<dbReference type="InterPro" id="IPR014272">
    <property type="entry name" value="ATPase_V0-cplx_csu"/>
</dbReference>
<dbReference type="InterPro" id="IPR002843">
    <property type="entry name" value="ATPase_V0-cplx_csu/dsu"/>
</dbReference>
<dbReference type="InterPro" id="IPR050873">
    <property type="entry name" value="V-ATPase_V0D/AC39_subunit"/>
</dbReference>
<dbReference type="InterPro" id="IPR035067">
    <property type="entry name" value="V-type_ATPase_csu/dsu"/>
</dbReference>
<dbReference type="InterPro" id="IPR044911">
    <property type="entry name" value="V-type_ATPase_csu/dsu_dom_3"/>
</dbReference>
<dbReference type="NCBIfam" id="TIGR02923">
    <property type="entry name" value="AhaC"/>
    <property type="match status" value="1"/>
</dbReference>
<dbReference type="NCBIfam" id="NF002265">
    <property type="entry name" value="PRK01198.1-1"/>
    <property type="match status" value="1"/>
</dbReference>
<dbReference type="PANTHER" id="PTHR38682">
    <property type="entry name" value="V-TYPE ATP SYNTHASE SUBUNIT C"/>
    <property type="match status" value="1"/>
</dbReference>
<dbReference type="PANTHER" id="PTHR38682:SF1">
    <property type="entry name" value="V-TYPE ATP SYNTHASE SUBUNIT C"/>
    <property type="match status" value="1"/>
</dbReference>
<dbReference type="Pfam" id="PF01992">
    <property type="entry name" value="vATP-synt_AC39"/>
    <property type="match status" value="1"/>
</dbReference>
<dbReference type="SUPFAM" id="SSF103486">
    <property type="entry name" value="V-type ATP synthase subunit C"/>
    <property type="match status" value="1"/>
</dbReference>
<organism>
    <name type="scientific">Halorubrum lacusprofundi (strain ATCC 49239 / DSM 5036 / JCM 8891 / ACAM 34)</name>
    <dbReference type="NCBI Taxonomy" id="416348"/>
    <lineage>
        <taxon>Archaea</taxon>
        <taxon>Methanobacteriati</taxon>
        <taxon>Methanobacteriota</taxon>
        <taxon>Stenosarchaea group</taxon>
        <taxon>Halobacteria</taxon>
        <taxon>Halobacteriales</taxon>
        <taxon>Haloferacaceae</taxon>
        <taxon>Halorubrum</taxon>
    </lineage>
</organism>
<keyword id="KW-0066">ATP synthesis</keyword>
<keyword id="KW-1003">Cell membrane</keyword>
<keyword id="KW-0375">Hydrogen ion transport</keyword>
<keyword id="KW-0406">Ion transport</keyword>
<keyword id="KW-0472">Membrane</keyword>
<keyword id="KW-1185">Reference proteome</keyword>
<keyword id="KW-0813">Transport</keyword>
<evidence type="ECO:0000255" key="1">
    <source>
        <dbReference type="HAMAP-Rule" id="MF_00314"/>
    </source>
</evidence>
<sequence length="348" mass="38664">MSAVGSSNPEYVVARVRARRGSLYGDEEYRKLTRMGPAEIARFMEESSYGTEINALGSLHGGVDLIEYALNRNLAGQFDDILDWSEGSLYGLIARYLRKFDAWNVKTVIRGVYTDADQSEIEVDLIRAGEFDDRRIRRLLEADSIDAVVEVLEDTIYGDPLREAYAEYEETGVLVPLENAVDRAFYERLLSGLGNDEPTRQYEAFLKAEVDFRNAANALRLARSGADIDPAAYFIEGGELFTRGSLARLARNLDELVEYIADSQYGDELGPALRELEEANSLIAFEHATDAALLAYGDQLGTIHPVSVTPVISYILAKEREVENIRAIARGKEAGLSADEIESELVIT</sequence>
<protein>
    <recommendedName>
        <fullName evidence="1">A-type ATP synthase subunit C</fullName>
    </recommendedName>
</protein>
<name>AATC_HALLT</name>
<gene>
    <name evidence="1" type="primary">atpC</name>
    <name type="ordered locus">Hlac_0279</name>
</gene>
<accession>B9LS39</accession>
<feature type="chain" id="PRO_1000132913" description="A-type ATP synthase subunit C">
    <location>
        <begin position="1"/>
        <end position="348"/>
    </location>
</feature>